<name>LOR4_ARATH</name>
<comment type="function">
    <text evidence="1">Might be related to the phospholipid scramblase and tubby-like superfamily of membrane tethered transcription factors.</text>
</comment>
<comment type="similarity">
    <text evidence="2">Belongs to the LOR family.</text>
</comment>
<protein>
    <recommendedName>
        <fullName>Protein LURP-one-related 4</fullName>
    </recommendedName>
</protein>
<dbReference type="EMBL" id="AC008047">
    <property type="protein sequence ID" value="AAF19698.1"/>
    <property type="molecule type" value="Genomic_DNA"/>
</dbReference>
<dbReference type="EMBL" id="CP002684">
    <property type="protein sequence ID" value="ANM59607.1"/>
    <property type="molecule type" value="Genomic_DNA"/>
</dbReference>
<dbReference type="RefSeq" id="NP_001321952.1">
    <property type="nucleotide sequence ID" value="NM_001334090.1"/>
</dbReference>
<dbReference type="SMR" id="Q9SH27"/>
<dbReference type="STRING" id="3702.Q9SH27"/>
<dbReference type="PaxDb" id="3702-AT1G63410.1"/>
<dbReference type="EnsemblPlants" id="AT1G63410.2">
    <property type="protein sequence ID" value="AT1G63410.2"/>
    <property type="gene ID" value="AT1G63410"/>
</dbReference>
<dbReference type="GeneID" id="842647"/>
<dbReference type="Gramene" id="AT1G63410.2">
    <property type="protein sequence ID" value="AT1G63410.2"/>
    <property type="gene ID" value="AT1G63410"/>
</dbReference>
<dbReference type="KEGG" id="ath:AT1G63410"/>
<dbReference type="Araport" id="AT1G63410"/>
<dbReference type="TAIR" id="AT1G63410"/>
<dbReference type="eggNOG" id="ENOG502RYHC">
    <property type="taxonomic scope" value="Eukaryota"/>
</dbReference>
<dbReference type="HOGENOM" id="CLU_063146_2_1_1"/>
<dbReference type="InParanoid" id="Q9SH27"/>
<dbReference type="OrthoDB" id="652749at2759"/>
<dbReference type="PRO" id="PR:Q9SH27"/>
<dbReference type="Proteomes" id="UP000006548">
    <property type="component" value="Chromosome 1"/>
</dbReference>
<dbReference type="ExpressionAtlas" id="Q9SH27">
    <property type="expression patterns" value="baseline and differential"/>
</dbReference>
<dbReference type="Gene3D" id="2.40.160.200">
    <property type="entry name" value="LURP1-related"/>
    <property type="match status" value="1"/>
</dbReference>
<dbReference type="InterPro" id="IPR007612">
    <property type="entry name" value="LOR"/>
</dbReference>
<dbReference type="InterPro" id="IPR038595">
    <property type="entry name" value="LOR_sf"/>
</dbReference>
<dbReference type="InterPro" id="IPR025659">
    <property type="entry name" value="Tubby-like_C"/>
</dbReference>
<dbReference type="PANTHER" id="PTHR31087">
    <property type="match status" value="1"/>
</dbReference>
<dbReference type="PANTHER" id="PTHR31087:SF59">
    <property type="entry name" value="PROTEIN LURP-ONE-RELATED 4"/>
    <property type="match status" value="1"/>
</dbReference>
<dbReference type="Pfam" id="PF04525">
    <property type="entry name" value="LOR"/>
    <property type="match status" value="1"/>
</dbReference>
<dbReference type="SUPFAM" id="SSF54518">
    <property type="entry name" value="Tubby C-terminal domain-like"/>
    <property type="match status" value="1"/>
</dbReference>
<reference key="1">
    <citation type="journal article" date="2000" name="Nature">
        <title>Sequence and analysis of chromosome 1 of the plant Arabidopsis thaliana.</title>
        <authorList>
            <person name="Theologis A."/>
            <person name="Ecker J.R."/>
            <person name="Palm C.J."/>
            <person name="Federspiel N.A."/>
            <person name="Kaul S."/>
            <person name="White O."/>
            <person name="Alonso J."/>
            <person name="Altafi H."/>
            <person name="Araujo R."/>
            <person name="Bowman C.L."/>
            <person name="Brooks S.Y."/>
            <person name="Buehler E."/>
            <person name="Chan A."/>
            <person name="Chao Q."/>
            <person name="Chen H."/>
            <person name="Cheuk R.F."/>
            <person name="Chin C.W."/>
            <person name="Chung M.K."/>
            <person name="Conn L."/>
            <person name="Conway A.B."/>
            <person name="Conway A.R."/>
            <person name="Creasy T.H."/>
            <person name="Dewar K."/>
            <person name="Dunn P."/>
            <person name="Etgu P."/>
            <person name="Feldblyum T.V."/>
            <person name="Feng J.-D."/>
            <person name="Fong B."/>
            <person name="Fujii C.Y."/>
            <person name="Gill J.E."/>
            <person name="Goldsmith A.D."/>
            <person name="Haas B."/>
            <person name="Hansen N.F."/>
            <person name="Hughes B."/>
            <person name="Huizar L."/>
            <person name="Hunter J.L."/>
            <person name="Jenkins J."/>
            <person name="Johnson-Hopson C."/>
            <person name="Khan S."/>
            <person name="Khaykin E."/>
            <person name="Kim C.J."/>
            <person name="Koo H.L."/>
            <person name="Kremenetskaia I."/>
            <person name="Kurtz D.B."/>
            <person name="Kwan A."/>
            <person name="Lam B."/>
            <person name="Langin-Hooper S."/>
            <person name="Lee A."/>
            <person name="Lee J.M."/>
            <person name="Lenz C.A."/>
            <person name="Li J.H."/>
            <person name="Li Y.-P."/>
            <person name="Lin X."/>
            <person name="Liu S.X."/>
            <person name="Liu Z.A."/>
            <person name="Luros J.S."/>
            <person name="Maiti R."/>
            <person name="Marziali A."/>
            <person name="Militscher J."/>
            <person name="Miranda M."/>
            <person name="Nguyen M."/>
            <person name="Nierman W.C."/>
            <person name="Osborne B.I."/>
            <person name="Pai G."/>
            <person name="Peterson J."/>
            <person name="Pham P.K."/>
            <person name="Rizzo M."/>
            <person name="Rooney T."/>
            <person name="Rowley D."/>
            <person name="Sakano H."/>
            <person name="Salzberg S.L."/>
            <person name="Schwartz J.R."/>
            <person name="Shinn P."/>
            <person name="Southwick A.M."/>
            <person name="Sun H."/>
            <person name="Tallon L.J."/>
            <person name="Tambunga G."/>
            <person name="Toriumi M.J."/>
            <person name="Town C.D."/>
            <person name="Utterback T."/>
            <person name="Van Aken S."/>
            <person name="Vaysberg M."/>
            <person name="Vysotskaia V.S."/>
            <person name="Walker M."/>
            <person name="Wu D."/>
            <person name="Yu G."/>
            <person name="Fraser C.M."/>
            <person name="Venter J.C."/>
            <person name="Davis R.W."/>
        </authorList>
    </citation>
    <scope>NUCLEOTIDE SEQUENCE [LARGE SCALE GENOMIC DNA]</scope>
    <source>
        <strain>cv. Columbia</strain>
    </source>
</reference>
<reference key="2">
    <citation type="journal article" date="2017" name="Plant J.">
        <title>Araport11: a complete reannotation of the Arabidopsis thaliana reference genome.</title>
        <authorList>
            <person name="Cheng C.Y."/>
            <person name="Krishnakumar V."/>
            <person name="Chan A.P."/>
            <person name="Thibaud-Nissen F."/>
            <person name="Schobel S."/>
            <person name="Town C.D."/>
        </authorList>
    </citation>
    <scope>GENOME REANNOTATION</scope>
    <source>
        <strain>cv. Columbia</strain>
    </source>
</reference>
<accession>Q9SH27</accession>
<accession>F4I231</accession>
<organism>
    <name type="scientific">Arabidopsis thaliana</name>
    <name type="common">Mouse-ear cress</name>
    <dbReference type="NCBI Taxonomy" id="3702"/>
    <lineage>
        <taxon>Eukaryota</taxon>
        <taxon>Viridiplantae</taxon>
        <taxon>Streptophyta</taxon>
        <taxon>Embryophyta</taxon>
        <taxon>Tracheophyta</taxon>
        <taxon>Spermatophyta</taxon>
        <taxon>Magnoliopsida</taxon>
        <taxon>eudicotyledons</taxon>
        <taxon>Gunneridae</taxon>
        <taxon>Pentapetalae</taxon>
        <taxon>rosids</taxon>
        <taxon>malvids</taxon>
        <taxon>Brassicales</taxon>
        <taxon>Brassicaceae</taxon>
        <taxon>Camelineae</taxon>
        <taxon>Arabidopsis</taxon>
    </lineage>
</organism>
<evidence type="ECO:0000250" key="1"/>
<evidence type="ECO:0000305" key="2"/>
<keyword id="KW-1185">Reference proteome</keyword>
<gene>
    <name type="ordered locus">At1g63410</name>
    <name type="ORF">F2K11.21</name>
</gene>
<feature type="chain" id="PRO_0000399236" description="Protein LURP-one-related 4">
    <location>
        <begin position="1"/>
        <end position="215"/>
    </location>
</feature>
<proteinExistence type="inferred from homology"/>
<sequence length="215" mass="24752">MARVFPQAAISSPYMSTERETFTVWMKSLVYQTNGLTVYNSNGEITYRVENYDKCSNEVHIMDLHGNILFTIRKKKLWLFGSWYVYRECGSFTSTEEVKPCARIKRSSIRDGDWEVRDETNEVFWILRFDPKFAFQIIDIHGNIIAQVKPKQSSNGITLGEDVLTLEVKPRVDHSLVVTLVTVYGLIKGIDGEVKQLRDFEEEEVAVGDEIAIEI</sequence>